<reference key="1">
    <citation type="submission" date="1998-08" db="EMBL/GenBank/DDBJ databases">
        <title>Human beta-cop homolog gene, complete CDS.</title>
        <authorList>
            <person name="Zhang J."/>
            <person name="Liu T."/>
            <person name="Fu G."/>
            <person name="Li W."/>
            <person name="Ye M."/>
            <person name="Zhou J."/>
            <person name="Wu J."/>
            <person name="Shen Y."/>
            <person name="Yu M."/>
            <person name="Chen S."/>
            <person name="Mao M."/>
            <person name="Chen Z."/>
        </authorList>
    </citation>
    <scope>NUCLEOTIDE SEQUENCE [MRNA]</scope>
</reference>
<reference key="2">
    <citation type="submission" date="1998-12" db="EMBL/GenBank/DDBJ databases">
        <authorList>
            <person name="Xu Y.Y."/>
            <person name="Sun L.Z."/>
            <person name="Wu Q.Y."/>
            <person name="Liu Y.Q."/>
            <person name="Liu B."/>
            <person name="Zhao B."/>
            <person name="Wang X.Y."/>
            <person name="Song L."/>
            <person name="Ye J."/>
            <person name="Sheng H."/>
            <person name="Gao Y."/>
            <person name="Zhang C.L."/>
            <person name="Zhang J."/>
            <person name="Wei Y.J."/>
            <person name="Sun Y.H."/>
            <person name="Jiang Y.X."/>
            <person name="Zhao X.W."/>
            <person name="Liu S."/>
            <person name="Liu L.S."/>
            <person name="Ding J.F."/>
            <person name="Gao R.L."/>
            <person name="Qiang B.Q."/>
            <person name="Yuan J.G."/>
            <person name="Liew C.C."/>
            <person name="Zhao M.S."/>
            <person name="Hui R.T."/>
        </authorList>
    </citation>
    <scope>NUCLEOTIDE SEQUENCE [LARGE SCALE MRNA]</scope>
    <source>
        <tissue>Aorta</tissue>
    </source>
</reference>
<reference key="3">
    <citation type="journal article" date="2001" name="Genome Res.">
        <title>Towards a catalog of human genes and proteins: sequencing and analysis of 500 novel complete protein coding human cDNAs.</title>
        <authorList>
            <person name="Wiemann S."/>
            <person name="Weil B."/>
            <person name="Wellenreuther R."/>
            <person name="Gassenhuber J."/>
            <person name="Glassl S."/>
            <person name="Ansorge W."/>
            <person name="Boecher M."/>
            <person name="Bloecker H."/>
            <person name="Bauersachs S."/>
            <person name="Blum H."/>
            <person name="Lauber J."/>
            <person name="Duesterhoeft A."/>
            <person name="Beyer A."/>
            <person name="Koehrer K."/>
            <person name="Strack N."/>
            <person name="Mewes H.-W."/>
            <person name="Ottenwaelder B."/>
            <person name="Obermaier B."/>
            <person name="Tampe J."/>
            <person name="Heubner D."/>
            <person name="Wambutt R."/>
            <person name="Korn B."/>
            <person name="Klein M."/>
            <person name="Poustka A."/>
        </authorList>
    </citation>
    <scope>NUCLEOTIDE SEQUENCE [LARGE SCALE MRNA]</scope>
    <source>
        <tissue>Amygdala</tissue>
    </source>
</reference>
<reference key="4">
    <citation type="submission" date="2005-09" db="EMBL/GenBank/DDBJ databases">
        <authorList>
            <person name="Mural R.J."/>
            <person name="Istrail S."/>
            <person name="Sutton G.G."/>
            <person name="Florea L."/>
            <person name="Halpern A.L."/>
            <person name="Mobarry C.M."/>
            <person name="Lippert R."/>
            <person name="Walenz B."/>
            <person name="Shatkay H."/>
            <person name="Dew I."/>
            <person name="Miller J.R."/>
            <person name="Flanigan M.J."/>
            <person name="Edwards N.J."/>
            <person name="Bolanos R."/>
            <person name="Fasulo D."/>
            <person name="Halldorsson B.V."/>
            <person name="Hannenhalli S."/>
            <person name="Turner R."/>
            <person name="Yooseph S."/>
            <person name="Lu F."/>
            <person name="Nusskern D.R."/>
            <person name="Shue B.C."/>
            <person name="Zheng X.H."/>
            <person name="Zhong F."/>
            <person name="Delcher A.L."/>
            <person name="Huson D.H."/>
            <person name="Kravitz S.A."/>
            <person name="Mouchard L."/>
            <person name="Reinert K."/>
            <person name="Remington K.A."/>
            <person name="Clark A.G."/>
            <person name="Waterman M.S."/>
            <person name="Eichler E.E."/>
            <person name="Adams M.D."/>
            <person name="Hunkapiller M.W."/>
            <person name="Myers E.W."/>
            <person name="Venter J.C."/>
        </authorList>
    </citation>
    <scope>NUCLEOTIDE SEQUENCE [LARGE SCALE GENOMIC DNA]</scope>
</reference>
<reference key="5">
    <citation type="journal article" date="2004" name="Genome Res.">
        <title>The status, quality, and expansion of the NIH full-length cDNA project: the Mammalian Gene Collection (MGC).</title>
        <authorList>
            <consortium name="The MGC Project Team"/>
        </authorList>
    </citation>
    <scope>NUCLEOTIDE SEQUENCE [LARGE SCALE MRNA]</scope>
    <source>
        <tissue>Testis</tissue>
    </source>
</reference>
<reference key="6">
    <citation type="journal article" date="1994" name="J. Biol. Chem.">
        <title>Physical interaction of the HIV-1 Nef protein with beta-COP, a component of non-clathrin-coated vesicles essential for membrane traffic.</title>
        <authorList>
            <person name="Benichou S."/>
            <person name="Bomsel M."/>
            <person name="Bodeus M."/>
            <person name="Durand H."/>
            <person name="Doute M."/>
            <person name="Letourneur F."/>
            <person name="Camonis J."/>
            <person name="Benarous R."/>
        </authorList>
    </citation>
    <scope>NUCLEOTIDE SEQUENCE [MRNA] OF 651-953</scope>
    <scope>INTERACTION WITH HIV-1 NEF (MICROBIAL INFECTION)</scope>
    <source>
        <tissue>Lymphoid tissue</tissue>
    </source>
</reference>
<reference key="7">
    <citation type="journal article" date="1995" name="Am. J. Hum. Genet.">
        <title>The oculocerebrorenal syndrome gene product is a 105-kD protein localized to the Golgi complex.</title>
        <authorList>
            <person name="Olivos-Glander I.M."/>
            <person name="Janne P.A."/>
            <person name="Nussbaum R.L."/>
        </authorList>
    </citation>
    <scope>SUBCELLULAR LOCATION</scope>
</reference>
<reference key="8">
    <citation type="journal article" date="2000" name="J. Biochem.">
        <title>Identification and characterization of novel isoforms of COP I subunits.</title>
        <authorList>
            <person name="Futatsumori M."/>
            <person name="Kasai K."/>
            <person name="Takatsu H."/>
            <person name="Shin H.-W."/>
            <person name="Nakayama K."/>
        </authorList>
    </citation>
    <scope>INTERACTION WITH COPG1</scope>
    <scope>SUBUNIT</scope>
    <scope>SUBCELLULAR LOCATION</scope>
</reference>
<reference key="9">
    <citation type="journal article" date="2001" name="Immunity">
        <title>The truncated cytoplasmic tail of HLA-G serves a quality-control function in post-ER compartments.</title>
        <authorList>
            <person name="Park B."/>
            <person name="Lee S."/>
            <person name="Kim E."/>
            <person name="Chang S."/>
            <person name="Jin M."/>
            <person name="Ahn K."/>
        </authorList>
    </citation>
    <scope>SUBUNIT</scope>
</reference>
<reference key="10">
    <citation type="journal article" date="2003" name="J. Biol. Chem.">
        <title>An essential function of tapasin in quality control of HLA-G molecules.</title>
        <authorList>
            <person name="Park B."/>
            <person name="Ahn K."/>
        </authorList>
    </citation>
    <scope>SUBUNIT</scope>
</reference>
<reference key="11">
    <citation type="journal article" date="2007" name="Traffic">
        <title>Multiple and stepwise interactions between coatomer and ADP-ribosylation factor-1 (Arf1)-GTP.</title>
        <authorList>
            <person name="Sun Z."/>
            <person name="Anderl F."/>
            <person name="Frohlich K."/>
            <person name="Zhao L."/>
            <person name="Hanke S."/>
            <person name="Brugger B."/>
            <person name="Wieland F."/>
            <person name="Bethune J."/>
        </authorList>
    </citation>
    <scope>INTERACTION WITH ARF1</scope>
    <scope>SUBCELLULAR LOCATION</scope>
    <scope>IDENTIFICATION BY MASS SPECTROMETRY</scope>
</reference>
<reference key="12">
    <citation type="journal article" date="2008" name="Am. J. Physiol.">
        <title>Depletion of beta-COP reveals a role for COP-I in compartmentalization of secretory compartments and in biosynthetic transport of caveolin-1.</title>
        <authorList>
            <person name="Styers M.L."/>
            <person name="O'Connor A.K."/>
            <person name="Grabski R."/>
            <person name="Cormet-Boyaka E."/>
            <person name="Sztul E."/>
        </authorList>
    </citation>
    <scope>FUNCTION</scope>
    <scope>SUBCELLULAR LOCATION</scope>
</reference>
<reference key="13">
    <citation type="journal article" date="2008" name="J. Biol. Chem.">
        <title>Scyl1, mutated in a recessive form of spinocerebellar neurodegeneration, regulates COPI-mediated retrograde traffic.</title>
        <authorList>
            <person name="Burman J.L."/>
            <person name="Bourbonniere L."/>
            <person name="Philie J."/>
            <person name="Stroh T."/>
            <person name="Dejgaard S.Y."/>
            <person name="Presley J.F."/>
            <person name="McPherson P.S."/>
        </authorList>
    </citation>
    <scope>INTERACTION WITH SCYL1</scope>
</reference>
<reference key="14">
    <citation type="journal article" date="2008" name="PLoS Pathog.">
        <title>HIV-1 Nef targets MHC-I and CD4 for degradation via a final common beta-COP-dependent pathway in T cells.</title>
        <authorList>
            <person name="Schaefer M.R."/>
            <person name="Wonderlich E.R."/>
            <person name="Roeth J.F."/>
            <person name="Leonard J.A."/>
            <person name="Collins K.L."/>
        </authorList>
    </citation>
    <scope>FUNCTION</scope>
    <scope>INTERACTION WITH HIV-1 NEF (MICROBIAL INFECTION)</scope>
</reference>
<reference key="15">
    <citation type="journal article" date="2008" name="Proc. Natl. Acad. Sci. U.S.A.">
        <title>COPI coatomer complex proteins facilitate the translocation of anthrax lethal factor across vesicular membranes in vitro.</title>
        <authorList>
            <person name="Tamayo A.G."/>
            <person name="Bharti A."/>
            <person name="Trujillo C."/>
            <person name="Harrison R."/>
            <person name="Murphy J.R."/>
        </authorList>
    </citation>
    <scope>INTERACTION WITH ANTHRAX LETHAL FACTOR</scope>
</reference>
<reference key="16">
    <citation type="journal article" date="2009" name="Anal. Chem.">
        <title>Lys-N and trypsin cover complementary parts of the phosphoproteome in a refined SCX-based approach.</title>
        <authorList>
            <person name="Gauci S."/>
            <person name="Helbig A.O."/>
            <person name="Slijper M."/>
            <person name="Krijgsveld J."/>
            <person name="Heck A.J."/>
            <person name="Mohammed S."/>
        </authorList>
    </citation>
    <scope>ACETYLATION [LARGE SCALE ANALYSIS] AT THR-2</scope>
    <scope>CLEAVAGE OF INITIATOR METHIONINE [LARGE SCALE ANALYSIS]</scope>
    <scope>IDENTIFICATION BY MASS SPECTROMETRY [LARGE SCALE ANALYSIS]</scope>
</reference>
<reference key="17">
    <citation type="journal article" date="2009" name="J. Cell Biol.">
        <title>Early endosomes and endosomal coatomer are required for autophagy.</title>
        <authorList>
            <person name="Razi M."/>
            <person name="Chan E.Y."/>
            <person name="Tooze S.A."/>
        </authorList>
    </citation>
    <scope>FUNCTION</scope>
</reference>
<reference key="18">
    <citation type="journal article" date="2010" name="Biochem. Biophys. Res. Commun.">
        <title>Enhancement of TREK1 channel surface expression by protein-protein interaction with beta-COP.</title>
        <authorList>
            <person name="Kim E."/>
            <person name="Hwang E.M."/>
            <person name="Yarishkin O."/>
            <person name="Yoo J.C."/>
            <person name="Kim D."/>
            <person name="Park N."/>
            <person name="Cho M."/>
            <person name="Lee Y.S."/>
            <person name="Sun C.H."/>
            <person name="Yi G.S."/>
            <person name="Yoo J."/>
            <person name="Kang D."/>
            <person name="Han J."/>
            <person name="Hong S.G."/>
            <person name="Park J.Y."/>
        </authorList>
    </citation>
    <scope>INTERACTION WITH KCNK2</scope>
    <scope>SUBCELLULAR LOCATION</scope>
</reference>
<reference key="19">
    <citation type="journal article" date="2010" name="J. Biol. Chem.">
        <title>Quantitative proteomics analysis of cell cycle-regulated Golgi disassembly and reassembly.</title>
        <authorList>
            <person name="Chen X."/>
            <person name="Simon E.S."/>
            <person name="Xiang Y."/>
            <person name="Kachman M."/>
            <person name="Andrews P.C."/>
            <person name="Wang Y."/>
        </authorList>
    </citation>
    <scope>FUNCTION</scope>
    <scope>SUBCELLULAR LOCATION</scope>
    <scope>IDENTIFICATION BY MASS SPECTROMETRY</scope>
</reference>
<reference key="20">
    <citation type="journal article" date="2011" name="BMC Syst. Biol.">
        <title>Initial characterization of the human central proteome.</title>
        <authorList>
            <person name="Burkard T.R."/>
            <person name="Planyavsky M."/>
            <person name="Kaupe I."/>
            <person name="Breitwieser F.P."/>
            <person name="Buerckstuemmer T."/>
            <person name="Bennett K.L."/>
            <person name="Superti-Furga G."/>
            <person name="Colinge J."/>
        </authorList>
    </citation>
    <scope>IDENTIFICATION BY MASS SPECTROMETRY [LARGE SCALE ANALYSIS]</scope>
</reference>
<reference key="21">
    <citation type="journal article" date="2012" name="Mol. Cell. Proteomics">
        <title>Comparative large-scale characterisation of plant vs. mammal proteins reveals similar and idiosyncratic N-alpha acetylation features.</title>
        <authorList>
            <person name="Bienvenut W.V."/>
            <person name="Sumpton D."/>
            <person name="Martinez A."/>
            <person name="Lilla S."/>
            <person name="Espagne C."/>
            <person name="Meinnel T."/>
            <person name="Giglione C."/>
        </authorList>
    </citation>
    <scope>ACETYLATION [LARGE SCALE ANALYSIS] AT THR-2</scope>
    <scope>CLEAVAGE OF INITIATOR METHIONINE [LARGE SCALE ANALYSIS]</scope>
    <scope>IDENTIFICATION BY MASS SPECTROMETRY [LARGE SCALE ANALYSIS]</scope>
</reference>
<reference key="22">
    <citation type="journal article" date="2014" name="J. Cell Sci.">
        <title>TMEM115 is an integral membrane protein of the Golgi complex involved in retrograde transport.</title>
        <authorList>
            <person name="Ong Y.S."/>
            <person name="Tran T.H."/>
            <person name="Gounko N.V."/>
            <person name="Hong W."/>
        </authorList>
    </citation>
    <scope>INTERACTION WITH TMEM115</scope>
</reference>
<reference key="23">
    <citation type="journal article" date="2014" name="J. Proteomics">
        <title>An enzyme assisted RP-RPLC approach for in-depth analysis of human liver phosphoproteome.</title>
        <authorList>
            <person name="Bian Y."/>
            <person name="Song C."/>
            <person name="Cheng K."/>
            <person name="Dong M."/>
            <person name="Wang F."/>
            <person name="Huang J."/>
            <person name="Sun D."/>
            <person name="Wang L."/>
            <person name="Ye M."/>
            <person name="Zou H."/>
        </authorList>
    </citation>
    <scope>IDENTIFICATION BY MASS SPECTROMETRY [LARGE SCALE ANALYSIS]</scope>
    <source>
        <tissue>Liver</tissue>
    </source>
</reference>
<reference key="24">
    <citation type="journal article" date="2015" name="Proteomics">
        <title>N-terminome analysis of the human mitochondrial proteome.</title>
        <authorList>
            <person name="Vaca Jacome A.S."/>
            <person name="Rabilloud T."/>
            <person name="Schaeffer-Reiss C."/>
            <person name="Rompais M."/>
            <person name="Ayoub D."/>
            <person name="Lane L."/>
            <person name="Bairoch A."/>
            <person name="Van Dorsselaer A."/>
            <person name="Carapito C."/>
        </authorList>
    </citation>
    <scope>IDENTIFICATION BY MASS SPECTROMETRY [LARGE SCALE ANALYSIS]</scope>
</reference>
<reference key="25">
    <citation type="journal article" date="2018" name="Biochem. Biophys. Res. Commun.">
        <title>Stasimon/Tmem41b localizes to mitochondria-associated ER membranes and is essential for mouse embryonic development.</title>
        <authorList>
            <person name="Van Alstyne M."/>
            <person name="Lotti F."/>
            <person name="Dal Mas A."/>
            <person name="Area-Gomez E."/>
            <person name="Pellizzoni L."/>
        </authorList>
    </citation>
    <scope>INTERACTION WITH TMEM41B</scope>
</reference>
<reference key="26">
    <citation type="journal article" date="2021" name="Genome Med.">
        <title>Biallelic variants in COPB1 cause a novel, severe intellectual disability syndrome with cataracts and variable microcephaly.</title>
        <authorList>
            <person name="Macken W.L."/>
            <person name="Godwin A."/>
            <person name="Wheway G."/>
            <person name="Stals K."/>
            <person name="Nazlamova L."/>
            <person name="Ellard S."/>
            <person name="Alfares A."/>
            <person name="Aloraini T."/>
            <person name="AlSubaie L."/>
            <person name="Alfadhel M."/>
            <person name="Alajaji S."/>
            <person name="Wai H.A."/>
            <person name="Self J."/>
            <person name="Douglas A.G.L."/>
            <person name="Kao A.P."/>
            <person name="Guille M."/>
            <person name="Baralle D."/>
        </authorList>
    </citation>
    <scope>VARIANT BARMACS VAL-551</scope>
    <scope>INVOLVEMENT IN BARMACS</scope>
</reference>
<evidence type="ECO:0000250" key="1"/>
<evidence type="ECO:0000250" key="2">
    <source>
        <dbReference type="UniProtKB" id="P23514"/>
    </source>
</evidence>
<evidence type="ECO:0000250" key="3">
    <source>
        <dbReference type="UniProtKB" id="Q9JIF7"/>
    </source>
</evidence>
<evidence type="ECO:0000269" key="4">
    <source>
    </source>
</evidence>
<evidence type="ECO:0000269" key="5">
    <source>
    </source>
</evidence>
<evidence type="ECO:0000269" key="6">
    <source>
    </source>
</evidence>
<evidence type="ECO:0000269" key="7">
    <source>
    </source>
</evidence>
<evidence type="ECO:0000269" key="8">
    <source>
    </source>
</evidence>
<evidence type="ECO:0000269" key="9">
    <source>
    </source>
</evidence>
<evidence type="ECO:0000269" key="10">
    <source>
    </source>
</evidence>
<evidence type="ECO:0000269" key="11">
    <source>
    </source>
</evidence>
<evidence type="ECO:0000269" key="12">
    <source>
    </source>
</evidence>
<evidence type="ECO:0000269" key="13">
    <source>
    </source>
</evidence>
<evidence type="ECO:0000269" key="14">
    <source>
    </source>
</evidence>
<evidence type="ECO:0000269" key="15">
    <source>
    </source>
</evidence>
<evidence type="ECO:0000269" key="16">
    <source>
    </source>
</evidence>
<evidence type="ECO:0000269" key="17">
    <source>
    </source>
</evidence>
<evidence type="ECO:0000303" key="18">
    <source>
    </source>
</evidence>
<evidence type="ECO:0000303" key="19">
    <source ref="1"/>
</evidence>
<evidence type="ECO:0000305" key="20"/>
<evidence type="ECO:0000312" key="21">
    <source>
        <dbReference type="HGNC" id="HGNC:2231"/>
    </source>
</evidence>
<evidence type="ECO:0007744" key="22">
    <source>
    </source>
</evidence>
<evidence type="ECO:0007744" key="23">
    <source>
    </source>
</evidence>
<organism>
    <name type="scientific">Homo sapiens</name>
    <name type="common">Human</name>
    <dbReference type="NCBI Taxonomy" id="9606"/>
    <lineage>
        <taxon>Eukaryota</taxon>
        <taxon>Metazoa</taxon>
        <taxon>Chordata</taxon>
        <taxon>Craniata</taxon>
        <taxon>Vertebrata</taxon>
        <taxon>Euteleostomi</taxon>
        <taxon>Mammalia</taxon>
        <taxon>Eutheria</taxon>
        <taxon>Euarchontoglires</taxon>
        <taxon>Primates</taxon>
        <taxon>Haplorrhini</taxon>
        <taxon>Catarrhini</taxon>
        <taxon>Hominidae</taxon>
        <taxon>Homo</taxon>
    </lineage>
</organism>
<keyword id="KW-0007">Acetylation</keyword>
<keyword id="KW-0898">Cataract</keyword>
<keyword id="KW-1003">Cell membrane</keyword>
<keyword id="KW-0963">Cytoplasm</keyword>
<keyword id="KW-0968">Cytoplasmic vesicle</keyword>
<keyword id="KW-0225">Disease variant</keyword>
<keyword id="KW-0931">ER-Golgi transport</keyword>
<keyword id="KW-0333">Golgi apparatus</keyword>
<keyword id="KW-0945">Host-virus interaction</keyword>
<keyword id="KW-0991">Intellectual disability</keyword>
<keyword id="KW-0472">Membrane</keyword>
<keyword id="KW-0653">Protein transport</keyword>
<keyword id="KW-1267">Proteomics identification</keyword>
<keyword id="KW-1185">Reference proteome</keyword>
<keyword id="KW-0677">Repeat</keyword>
<keyword id="KW-0813">Transport</keyword>
<accession>P53618</accession>
<accession>D3DQX0</accession>
<accession>Q6GTT7</accession>
<accession>Q9NTK2</accession>
<accession>Q9UNW7</accession>
<comment type="function">
    <text evidence="1 8 9 10 11">The coatomer is a cytosolic protein complex that binds to dilysine motifs and reversibly associates with Golgi non-clathrin-coated vesicles, which further mediate biosynthetic protein transport from the ER, via the Golgi up to the trans Golgi network. Coatomer complex is required for budding from Golgi membranes, and is essential for the retrograde Golgi-to-ER transport of dilysine-tagged proteins. In mammals, the coatomer can only be recruited by membranes associated to ADP-ribosylation factors (ARFs), which are small GTP-binding proteins; the complex also influences the Golgi structural integrity, as well as the processing, activity, and endocytic recycling of LDL receptors. Plays a functional role in facilitating the transport of kappa-type opioid receptor mRNAs into axons and enhances translation of these proteins. Required for limiting lipid storage in lipid droplets. Involved in lipid homeostasis by regulating the presence of perilipin family members PLIN2 and PLIN3 at the lipid droplet surface and promoting the association of adipocyte surface triglyceride lipase (PNPLA2) with the lipid droplet to mediate lipolysis (By similarity). Involved in the Golgi disassembly and reassembly processes during cell cycle. Involved in autophagy by playing a role in early endosome function. Plays a role in organellar compartmentalization of secretory compartments including endoplasmic reticulum (ER)-Golgi intermediate compartment (ERGIC), Golgi, trans-Golgi network (TGN) and recycling endosomes, and in biosynthetic transport of CAV1. Promotes degradation of Nef cellular targets CD4 and MHC class I antigens by facilitating their trafficking to degradative compartments.</text>
</comment>
<comment type="subunit">
    <text evidence="2 3 5 6 13 14">Oligomeric complex that consists of at least the alpha, beta, beta', gamma, delta, epsilon and zeta subunits. Interacts with SCYL1. Interacts with COPG1. Interacts (via trunk domain) with ARF1 (via switch I region); the interaction is direct. Interacts with KCNK2/TREK (via N-terminus); this interaction increases the channel-mediated whole cell currents and promotes plasma membrane expression of KCNK2/TREK. Interacts with anthrax lethal factor (LF); this interaction may facilitate endosomal vesicle membrane translocation of LF and its release from the lumen of endosomal vesicles to external milieu. Interacts with CAPN8 and PRKCE (By similarity). Interacts with ARF1 (myristoylated); this interaction is required for binding of COPB1 to Golgi membranes (By similarity). Interacts with STX17 (By similarity). Interacts with TMEM115. Interacts with HLA-G-B2M complex; this interaction mediates the endoplasmic reticulum (ER) retrieval of HLA-E-B2M complexes that bind low affinity peptides. Interacts with TMEM41B (PubMed:30352685).</text>
</comment>
<comment type="subunit">
    <text evidence="9 17">(Microbial infection) Interacts (via C-terminus) with HIV-1 Nef; the interaction is direct.</text>
</comment>
<comment type="interaction">
    <interactant intactId="EBI-359063">
        <id>P53618</id>
    </interactant>
    <interactant intactId="EBI-1044491">
        <id>P48444</id>
        <label>ARCN1</label>
    </interactant>
    <organismsDiffer>false</organismsDiffer>
    <experiments>3</experiments>
</comment>
<comment type="interaction">
    <interactant intactId="EBI-359063">
        <id>P53618</id>
    </interactant>
    <interactant intactId="EBI-702093">
        <id>P56945</id>
        <label>BCAR1</label>
    </interactant>
    <organismsDiffer>false</organismsDiffer>
    <experiments>3</experiments>
</comment>
<comment type="interaction">
    <interactant intactId="EBI-359063">
        <id>P53618</id>
    </interactant>
    <interactant intactId="EBI-1056249">
        <id>Q9BZE4</id>
        <label>GTPBP4</label>
    </interactant>
    <organismsDiffer>false</organismsDiffer>
    <experiments>3</experiments>
</comment>
<comment type="interaction">
    <interactant intactId="EBI-359063">
        <id>P53618</id>
    </interactant>
    <interactant intactId="EBI-466029">
        <id>P42858</id>
        <label>HTT</label>
    </interactant>
    <organismsDiffer>false</organismsDiffer>
    <experiments>6</experiments>
</comment>
<comment type="interaction">
    <interactant intactId="EBI-359063">
        <id>P53618</id>
    </interactant>
    <interactant intactId="EBI-3437878">
        <id>Q86T90</id>
        <label>KIAA1328</label>
    </interactant>
    <organismsDiffer>false</organismsDiffer>
    <experiments>3</experiments>
</comment>
<comment type="interaction">
    <interactant intactId="EBI-359063">
        <id>P53618</id>
    </interactant>
    <interactant intactId="EBI-1216080">
        <id>Q9Y250</id>
        <label>LZTS1</label>
    </interactant>
    <organismsDiffer>false</organismsDiffer>
    <experiments>3</experiments>
</comment>
<comment type="interaction">
    <interactant intactId="EBI-359063">
        <id>P53618</id>
    </interactant>
    <interactant intactId="EBI-2512429">
        <id>Q96RS6</id>
        <label>NUDCD1</label>
    </interactant>
    <organismsDiffer>false</organismsDiffer>
    <experiments>3</experiments>
</comment>
<comment type="interaction">
    <interactant intactId="EBI-359063">
        <id>P53618</id>
    </interactant>
    <interactant intactId="EBI-1044964">
        <id>Q9UH99</id>
        <label>SUN2</label>
    </interactant>
    <organismsDiffer>false</organismsDiffer>
    <experiments>3</experiments>
</comment>
<comment type="interaction">
    <interactant intactId="EBI-359063">
        <id>P53618</id>
    </interactant>
    <interactant intactId="EBI-741602">
        <id>O94972</id>
        <label>TRIM37</label>
    </interactant>
    <organismsDiffer>false</organismsDiffer>
    <experiments>4</experiments>
</comment>
<comment type="interaction">
    <interactant intactId="EBI-359063">
        <id>P53618</id>
    </interactant>
    <interactant intactId="EBI-3959652">
        <id>Q9BSA4</id>
        <label>TTYH2</label>
    </interactant>
    <organismsDiffer>false</organismsDiffer>
    <experiments>7</experiments>
</comment>
<comment type="subcellular location">
    <subcellularLocation>
        <location>Cytoplasm</location>
    </subcellularLocation>
    <subcellularLocation>
        <location evidence="4 7 16">Golgi apparatus membrane</location>
        <topology evidence="7 8 11">Peripheral membrane protein</topology>
        <orientation evidence="20">Cytoplasmic side</orientation>
    </subcellularLocation>
    <subcellularLocation>
        <location>Cytoplasmic vesicle</location>
        <location>COPI-coated vesicle membrane</location>
        <topology evidence="20">Peripheral membrane protein</topology>
        <orientation evidence="20">Cytoplasmic side</orientation>
    </subcellularLocation>
    <subcellularLocation>
        <location evidence="12">Cell membrane</location>
    </subcellularLocation>
    <subcellularLocation>
        <location evidence="3">Endoplasmic reticulum-Golgi intermediate compartment</location>
    </subcellularLocation>
    <text evidence="2 12">The coatomer is cytoplasmic or polymerized on the cytoplasmic side of the Golgi, as well as on the vesicles/buds originating from it (By similarity). Proteolytic cleavage by CAPN8 triggers translocation from Golgi to cytoplasm (By similarity). Found in perinuclear vesicular-tubular clusters (VTCs) and in the Golgi region where associated with vesicles, buds and rims of the Golgi stack (By similarity). Occasionally present at the trans-side of Golgi, but mainly present at the cis-Golgi side in transitional areas (TA), on so-called peripheral elements (PE) consisting of tubules and vesicles located between the cup-shaped transitional elements (TE) of the rough endoplasmic reticulum (RER) and the cis-most Golgi cisternae (By similarity). Present in cytoplasm, not associated with visible coats or membranes, with a minor fraction present on small clusters of tubules and vesicles (By similarity). Some association with high-density and low-density microsomes and mitochondria/nuclei fraction (By similarity). Very little found in plasma membrane fraction (PubMed:20362547).</text>
</comment>
<comment type="PTM">
    <text evidence="1">Proteolytically cleaved between Ser-528 and Ser-529 by CAPN8.</text>
</comment>
<comment type="disease" evidence="15">
    <disease id="DI-06071">
        <name>Baralle-Macken syndrome</name>
        <acronym>BARMACS</acronym>
        <description>An autosomal recessive disorder characterized by global developmental delay, impaired intellectual development, poor or absent speech, and difficulty walking or inability to walk. Affected individuals have early-onset cataracts. Additional variable features are microcephaly, facial dysmorphism, metabolic abnormalities, spasticity, and lymphopenia.</description>
        <dbReference type="MIM" id="619255"/>
    </disease>
    <text>The disease is caused by variants affecting the gene represented in this entry.</text>
</comment>
<comment type="miscellaneous">
    <text>Brefeldin A induces dissociation from the Golgi of the beta-COP and presumably the other coatomer subunits.</text>
</comment>
<dbReference type="EMBL" id="AF084457">
    <property type="protein sequence ID" value="AAD41240.1"/>
    <property type="molecule type" value="mRNA"/>
</dbReference>
<dbReference type="EMBL" id="AF111807">
    <property type="protein sequence ID" value="AAL39009.1"/>
    <property type="molecule type" value="mRNA"/>
</dbReference>
<dbReference type="EMBL" id="AL136593">
    <property type="protein sequence ID" value="CAB66528.1"/>
    <property type="molecule type" value="mRNA"/>
</dbReference>
<dbReference type="EMBL" id="CH471064">
    <property type="protein sequence ID" value="EAW68481.1"/>
    <property type="molecule type" value="Genomic_DNA"/>
</dbReference>
<dbReference type="EMBL" id="CH471064">
    <property type="protein sequence ID" value="EAW68482.1"/>
    <property type="molecule type" value="Genomic_DNA"/>
</dbReference>
<dbReference type="EMBL" id="CH471064">
    <property type="protein sequence ID" value="EAW68483.1"/>
    <property type="molecule type" value="Genomic_DNA"/>
</dbReference>
<dbReference type="EMBL" id="CH471064">
    <property type="protein sequence ID" value="EAW68484.1"/>
    <property type="molecule type" value="Genomic_DNA"/>
</dbReference>
<dbReference type="EMBL" id="CH471064">
    <property type="protein sequence ID" value="EAW68485.1"/>
    <property type="molecule type" value="Genomic_DNA"/>
</dbReference>
<dbReference type="EMBL" id="BC037280">
    <property type="protein sequence ID" value="AAH37280.1"/>
    <property type="molecule type" value="mRNA"/>
</dbReference>
<dbReference type="EMBL" id="X82103">
    <property type="protein sequence ID" value="CAA57622.1"/>
    <property type="molecule type" value="mRNA"/>
</dbReference>
<dbReference type="CCDS" id="CCDS7815.1"/>
<dbReference type="PIR" id="A55136">
    <property type="entry name" value="A55136"/>
</dbReference>
<dbReference type="PIR" id="T46913">
    <property type="entry name" value="T46913"/>
</dbReference>
<dbReference type="RefSeq" id="NP_001137533.1">
    <property type="nucleotide sequence ID" value="NM_001144061.2"/>
</dbReference>
<dbReference type="RefSeq" id="NP_001137534.1">
    <property type="nucleotide sequence ID" value="NM_001144062.2"/>
</dbReference>
<dbReference type="RefSeq" id="NP_057535.1">
    <property type="nucleotide sequence ID" value="NM_016451.5"/>
</dbReference>
<dbReference type="SMR" id="P53618"/>
<dbReference type="BioGRID" id="107710">
    <property type="interactions" value="308"/>
</dbReference>
<dbReference type="ComplexPortal" id="CPX-7803">
    <property type="entry name" value="COPI vesicle coat complex, COPG1-COPZ1 variant"/>
</dbReference>
<dbReference type="ComplexPortal" id="CPX-7969">
    <property type="entry name" value="COPI vesicle coat complex, COPG2-COPZ1 variant"/>
</dbReference>
<dbReference type="ComplexPortal" id="CPX-7970">
    <property type="entry name" value="COPI vesicle coat complex, COPG1-COPZ2 variant"/>
</dbReference>
<dbReference type="CORUM" id="P53618"/>
<dbReference type="DIP" id="DIP-265N"/>
<dbReference type="FunCoup" id="P53618">
    <property type="interactions" value="3552"/>
</dbReference>
<dbReference type="IntAct" id="P53618">
    <property type="interactions" value="137"/>
</dbReference>
<dbReference type="MINT" id="P53618"/>
<dbReference type="STRING" id="9606.ENSP00000249923"/>
<dbReference type="ChEMBL" id="CHEMBL4295782"/>
<dbReference type="GlyGen" id="P53618">
    <property type="glycosylation" value="2 sites, 1 O-linked glycan (1 site)"/>
</dbReference>
<dbReference type="iPTMnet" id="P53618"/>
<dbReference type="MetOSite" id="P53618"/>
<dbReference type="PhosphoSitePlus" id="P53618"/>
<dbReference type="SwissPalm" id="P53618"/>
<dbReference type="BioMuta" id="COPB1"/>
<dbReference type="DMDM" id="116241311"/>
<dbReference type="jPOST" id="P53618"/>
<dbReference type="MassIVE" id="P53618"/>
<dbReference type="PaxDb" id="9606-ENSP00000249923"/>
<dbReference type="PeptideAtlas" id="P53618"/>
<dbReference type="PRIDE" id="P53618"/>
<dbReference type="ProteomicsDB" id="56592"/>
<dbReference type="Pumba" id="P53618"/>
<dbReference type="Antibodypedia" id="3231">
    <property type="antibodies" value="234 antibodies from 32 providers"/>
</dbReference>
<dbReference type="DNASU" id="1315"/>
<dbReference type="Ensembl" id="ENST00000249923.7">
    <property type="protein sequence ID" value="ENSP00000249923.3"/>
    <property type="gene ID" value="ENSG00000129083.13"/>
</dbReference>
<dbReference type="Ensembl" id="ENST00000439561.7">
    <property type="protein sequence ID" value="ENSP00000397873.2"/>
    <property type="gene ID" value="ENSG00000129083.13"/>
</dbReference>
<dbReference type="GeneID" id="1315"/>
<dbReference type="KEGG" id="hsa:1315"/>
<dbReference type="MANE-Select" id="ENST00000439561.7">
    <property type="protein sequence ID" value="ENSP00000397873.2"/>
    <property type="RefSeq nucleotide sequence ID" value="NM_001144061.2"/>
    <property type="RefSeq protein sequence ID" value="NP_001137533.1"/>
</dbReference>
<dbReference type="UCSC" id="uc001mlh.3">
    <property type="organism name" value="human"/>
</dbReference>
<dbReference type="AGR" id="HGNC:2231"/>
<dbReference type="CTD" id="1315"/>
<dbReference type="DisGeNET" id="1315"/>
<dbReference type="GeneCards" id="COPB1"/>
<dbReference type="HGNC" id="HGNC:2231">
    <property type="gene designation" value="COPB1"/>
</dbReference>
<dbReference type="HPA" id="ENSG00000129083">
    <property type="expression patterns" value="Low tissue specificity"/>
</dbReference>
<dbReference type="MalaCards" id="COPB1"/>
<dbReference type="MIM" id="600959">
    <property type="type" value="gene"/>
</dbReference>
<dbReference type="MIM" id="619255">
    <property type="type" value="phenotype"/>
</dbReference>
<dbReference type="neXtProt" id="NX_P53618"/>
<dbReference type="OpenTargets" id="ENSG00000129083"/>
<dbReference type="Orphanet" id="633035">
    <property type="disease" value="Intellectual disability-early-onset cataract-microcephaly syndrome"/>
</dbReference>
<dbReference type="PharmGKB" id="PA26747"/>
<dbReference type="VEuPathDB" id="HostDB:ENSG00000129083"/>
<dbReference type="eggNOG" id="KOG1058">
    <property type="taxonomic scope" value="Eukaryota"/>
</dbReference>
<dbReference type="GeneTree" id="ENSGT00390000005270"/>
<dbReference type="HOGENOM" id="CLU_006949_0_0_1"/>
<dbReference type="InParanoid" id="P53618"/>
<dbReference type="OMA" id="IYKNFDW"/>
<dbReference type="OrthoDB" id="10261439at2759"/>
<dbReference type="PAN-GO" id="P53618">
    <property type="GO annotations" value="3 GO annotations based on evolutionary models"/>
</dbReference>
<dbReference type="PhylomeDB" id="P53618"/>
<dbReference type="TreeFam" id="TF105737"/>
<dbReference type="PathwayCommons" id="P53618"/>
<dbReference type="Reactome" id="R-HSA-6798695">
    <property type="pathway name" value="Neutrophil degranulation"/>
</dbReference>
<dbReference type="Reactome" id="R-HSA-6807878">
    <property type="pathway name" value="COPI-mediated anterograde transport"/>
</dbReference>
<dbReference type="Reactome" id="R-HSA-6811434">
    <property type="pathway name" value="COPI-dependent Golgi-to-ER retrograde traffic"/>
</dbReference>
<dbReference type="SignaLink" id="P53618"/>
<dbReference type="BioGRID-ORCS" id="1315">
    <property type="hits" value="821 hits in 1158 CRISPR screens"/>
</dbReference>
<dbReference type="CD-CODE" id="91857CE7">
    <property type="entry name" value="Nucleolus"/>
</dbReference>
<dbReference type="ChiTaRS" id="COPB1">
    <property type="organism name" value="human"/>
</dbReference>
<dbReference type="GeneWiki" id="COPB1"/>
<dbReference type="GenomeRNAi" id="1315"/>
<dbReference type="Pharos" id="P53618">
    <property type="development level" value="Tbio"/>
</dbReference>
<dbReference type="PRO" id="PR:P53618"/>
<dbReference type="Proteomes" id="UP000005640">
    <property type="component" value="Chromosome 11"/>
</dbReference>
<dbReference type="RNAct" id="P53618">
    <property type="molecule type" value="protein"/>
</dbReference>
<dbReference type="Bgee" id="ENSG00000129083">
    <property type="expression patterns" value="Expressed in choroid plexus epithelium and 216 other cell types or tissues"/>
</dbReference>
<dbReference type="ExpressionAtlas" id="P53618">
    <property type="expression patterns" value="baseline and differential"/>
</dbReference>
<dbReference type="GO" id="GO:0030126">
    <property type="term" value="C:COPI vesicle coat"/>
    <property type="evidence" value="ECO:0000250"/>
    <property type="project" value="UniProtKB"/>
</dbReference>
<dbReference type="GO" id="GO:0005829">
    <property type="term" value="C:cytosol"/>
    <property type="evidence" value="ECO:0000314"/>
    <property type="project" value="HPA"/>
</dbReference>
<dbReference type="GO" id="GO:0005789">
    <property type="term" value="C:endoplasmic reticulum membrane"/>
    <property type="evidence" value="ECO:0000304"/>
    <property type="project" value="Reactome"/>
</dbReference>
<dbReference type="GO" id="GO:0005793">
    <property type="term" value="C:endoplasmic reticulum-Golgi intermediate compartment"/>
    <property type="evidence" value="ECO:0007669"/>
    <property type="project" value="UniProtKB-SubCell"/>
</dbReference>
<dbReference type="GO" id="GO:0101003">
    <property type="term" value="C:ficolin-1-rich granule membrane"/>
    <property type="evidence" value="ECO:0000304"/>
    <property type="project" value="Reactome"/>
</dbReference>
<dbReference type="GO" id="GO:0005794">
    <property type="term" value="C:Golgi apparatus"/>
    <property type="evidence" value="ECO:0000314"/>
    <property type="project" value="UniProtKB"/>
</dbReference>
<dbReference type="GO" id="GO:0000139">
    <property type="term" value="C:Golgi membrane"/>
    <property type="evidence" value="ECO:0000304"/>
    <property type="project" value="Reactome"/>
</dbReference>
<dbReference type="GO" id="GO:0005798">
    <property type="term" value="C:Golgi-associated vesicle"/>
    <property type="evidence" value="ECO:0000304"/>
    <property type="project" value="ProtInc"/>
</dbReference>
<dbReference type="GO" id="GO:0043231">
    <property type="term" value="C:intracellular membrane-bounded organelle"/>
    <property type="evidence" value="ECO:0000314"/>
    <property type="project" value="HPA"/>
</dbReference>
<dbReference type="GO" id="GO:0016020">
    <property type="term" value="C:membrane"/>
    <property type="evidence" value="ECO:0007005"/>
    <property type="project" value="UniProtKB"/>
</dbReference>
<dbReference type="GO" id="GO:0005886">
    <property type="term" value="C:plasma membrane"/>
    <property type="evidence" value="ECO:0000304"/>
    <property type="project" value="Reactome"/>
</dbReference>
<dbReference type="GO" id="GO:0030667">
    <property type="term" value="C:secretory granule membrane"/>
    <property type="evidence" value="ECO:0000304"/>
    <property type="project" value="Reactome"/>
</dbReference>
<dbReference type="GO" id="GO:0070821">
    <property type="term" value="C:tertiary granule membrane"/>
    <property type="evidence" value="ECO:0000304"/>
    <property type="project" value="Reactome"/>
</dbReference>
<dbReference type="GO" id="GO:0030133">
    <property type="term" value="C:transport vesicle"/>
    <property type="evidence" value="ECO:0000304"/>
    <property type="project" value="Reactome"/>
</dbReference>
<dbReference type="GO" id="GO:0005198">
    <property type="term" value="F:structural molecule activity"/>
    <property type="evidence" value="ECO:0007669"/>
    <property type="project" value="InterPro"/>
</dbReference>
<dbReference type="GO" id="GO:0006888">
    <property type="term" value="P:endoplasmic reticulum to Golgi vesicle-mediated transport"/>
    <property type="evidence" value="ECO:0000318"/>
    <property type="project" value="GO_Central"/>
</dbReference>
<dbReference type="GO" id="GO:0006891">
    <property type="term" value="P:intra-Golgi vesicle-mediated transport"/>
    <property type="evidence" value="ECO:0000250"/>
    <property type="project" value="UniProtKB"/>
</dbReference>
<dbReference type="GO" id="GO:0006886">
    <property type="term" value="P:intracellular protein transport"/>
    <property type="evidence" value="ECO:0007669"/>
    <property type="project" value="InterPro"/>
</dbReference>
<dbReference type="Gene3D" id="1.25.10.10">
    <property type="entry name" value="Leucine-rich Repeat Variant"/>
    <property type="match status" value="1"/>
</dbReference>
<dbReference type="InterPro" id="IPR011989">
    <property type="entry name" value="ARM-like"/>
</dbReference>
<dbReference type="InterPro" id="IPR016024">
    <property type="entry name" value="ARM-type_fold"/>
</dbReference>
<dbReference type="InterPro" id="IPR002553">
    <property type="entry name" value="Clathrin/coatomer_adapt-like_N"/>
</dbReference>
<dbReference type="InterPro" id="IPR011710">
    <property type="entry name" value="Coatomer_bsu_C"/>
</dbReference>
<dbReference type="InterPro" id="IPR016460">
    <property type="entry name" value="COPB1"/>
</dbReference>
<dbReference type="InterPro" id="IPR029446">
    <property type="entry name" value="COPB1_appendage_platform_dom"/>
</dbReference>
<dbReference type="PANTHER" id="PTHR10635">
    <property type="entry name" value="COATOMER SUBUNIT BETA"/>
    <property type="match status" value="1"/>
</dbReference>
<dbReference type="PANTHER" id="PTHR10635:SF0">
    <property type="entry name" value="COATOMER SUBUNIT BETA"/>
    <property type="match status" value="1"/>
</dbReference>
<dbReference type="Pfam" id="PF01602">
    <property type="entry name" value="Adaptin_N"/>
    <property type="match status" value="1"/>
</dbReference>
<dbReference type="Pfam" id="PF07718">
    <property type="entry name" value="Coatamer_beta_C"/>
    <property type="match status" value="1"/>
</dbReference>
<dbReference type="Pfam" id="PF14806">
    <property type="entry name" value="Coatomer_b_Cpla"/>
    <property type="match status" value="1"/>
</dbReference>
<dbReference type="PIRSF" id="PIRSF005727">
    <property type="entry name" value="Coatomer_beta_subunit"/>
    <property type="match status" value="1"/>
</dbReference>
<dbReference type="SUPFAM" id="SSF48371">
    <property type="entry name" value="ARM repeat"/>
    <property type="match status" value="1"/>
</dbReference>
<proteinExistence type="evidence at protein level"/>
<name>COPB_HUMAN</name>
<gene>
    <name evidence="21" type="primary">COPB1</name>
    <name type="synonym">COPB</name>
    <name type="ORF">MSTP026</name>
</gene>
<sequence length="953" mass="107142">MTAAENVCYTLINVPMDSEPPSEISLKNDLEKGDVKSKTEALKKVIIMILNGEKLPGLLMTIIRFVLPLQDHTIKKLLLVFWEIVPKTTPDGRLLHEMILVCDAYRKDLQHPNEFIRGSTLRFLCKLKEAELLEPLMPAIRACLEHRHSYVRRNAVLAIYTIYRNFEHLIPDAPELIHDFLVNEKDASCKRNAFMMLIHADQDRALDYLSTCIDQVQTFGDILQLVIVELIYKVCHANPSERARFIRCIYNLLQSSSPAVKYEAAGTLVTLSSAPTAIKAAAQCYIDLIIKESDNNVKLIVLDRLIELKEHPAHERVLQDLVMDILRVLSTPDLEVRKKTLQLALDLVSSRNVEELVIVLKKEVIKTNNVSEHEDTDKYRQLLVRTLHSCSVRFPDMAANVIPVLMEFLSDNNEAAAADVLEFVREAIQRFDNLRMLIVEKMLEVFHAIKSVKIYRGALWILGEYCSTKEDIQSVMTEIRRSLGEIPIVESEIKKEAGELKPEEEITVGPVQKLVTEMGTYATQSALSSSRPTKKEEDRPPLRGFLLDGDFFVAASLATTLTKIALRYVALVQEKKKQNSFVAEAMLLMATILHLGKSSLPKKPITDDDVDRISLCLKVLSECSPLMNDIFNKECRQSLSHMLSAKLEEEKLSQKKESEKRNVTVQPDDPISFMQLTAKNEMNCKEDQFQLSLLAAMGNTQRKEAADPLASKLNKVTQLTGFSDPVYAEAYVHVNQYDIVLDVLVVNQTSDTLQNCTLELATLGDLKLVEKPSPLTLAPHDFANIKANVKVASTENGIIFGNIVYDVSGAASDRNCVVLSDIHIDIMDYIQPATCTDAEFRQMWAEFEWENKVTVNTNMVDLNDYLQHILKSTNMKCLTPEKALSGYCGFMAANLYARSIFGEDALANVSIEKPIHQGPDAAVTGHIRIRAKSQGMALSLGDKINLSQKKTSI</sequence>
<feature type="initiator methionine" description="Removed" evidence="22 23">
    <location>
        <position position="1"/>
    </location>
</feature>
<feature type="chain" id="PRO_0000193833" description="Coatomer subunit beta">
    <location>
        <begin position="2"/>
        <end position="953"/>
    </location>
</feature>
<feature type="repeat" description="HEAT 1">
    <location>
        <begin position="96"/>
        <end position="131"/>
    </location>
</feature>
<feature type="repeat" description="HEAT 2">
    <location>
        <begin position="132"/>
        <end position="168"/>
    </location>
</feature>
<feature type="repeat" description="HEAT 3">
    <location>
        <begin position="240"/>
        <end position="276"/>
    </location>
</feature>
<feature type="repeat" description="HEAT 4">
    <location>
        <begin position="277"/>
        <end position="314"/>
    </location>
</feature>
<feature type="repeat" description="HEAT 5">
    <location>
        <begin position="316"/>
        <end position="353"/>
    </location>
</feature>
<feature type="repeat" description="HEAT 6">
    <location>
        <begin position="396"/>
        <end position="433"/>
    </location>
</feature>
<feature type="modified residue" description="N-acetylthreonine" evidence="22 23">
    <location>
        <position position="2"/>
    </location>
</feature>
<feature type="modified residue" description="N6-acetyllysine" evidence="3">
    <location>
        <position position="494"/>
    </location>
</feature>
<feature type="sequence variant" id="VAR_085552" description="In BARMACS." evidence="15">
    <original>F</original>
    <variation>V</variation>
    <location>
        <position position="551"/>
    </location>
</feature>
<feature type="sequence conflict" description="In Ref. 1; AAD41240 and 6; CAA57622." evidence="20" ref="1 6">
    <original>D</original>
    <variation>E</variation>
    <location>
        <position position="825"/>
    </location>
</feature>
<feature type="sequence conflict" description="In Ref. 1; AAD41240 and 6; CAA57622." evidence="20" ref="1 6">
    <original>F</original>
    <variation>L</variation>
    <location>
        <position position="847"/>
    </location>
</feature>
<feature type="sequence conflict" description="In Ref. 1; AAD41240 and 6; CAA57622." evidence="20" ref="1 6">
    <original>I</original>
    <variation>S</variation>
    <location>
        <position position="911"/>
    </location>
</feature>
<feature type="sequence conflict" description="In Ref. 1; AAD41240 and 6; CAA57622." evidence="20" ref="1 6">
    <original>I</original>
    <variation>L</variation>
    <location>
        <position position="915"/>
    </location>
</feature>
<feature type="sequence conflict" description="In Ref. 1; AAD41240 and 6; CAA57622." evidence="20" ref="1 6">
    <original>G</original>
    <variation>V</variation>
    <location>
        <position position="925"/>
    </location>
</feature>
<feature type="sequence conflict" description="In Ref. 1; AAD41240 and 6; CAA57622." evidence="20" ref="1 6">
    <original>K</original>
    <variation>E</variation>
    <location>
        <position position="950"/>
    </location>
</feature>
<protein>
    <recommendedName>
        <fullName>Coatomer subunit beta</fullName>
    </recommendedName>
    <alternativeName>
        <fullName>Beta-coat protein</fullName>
        <shortName evidence="18 19">Beta-COP</shortName>
    </alternativeName>
</protein>